<sequence>MRNRIIVSACAALAMFAIQAPAHAAATDQLQSFVTGVKSARGEFTQRQVKGQGANGKVTGTSSGTFVFSRPGKFTWRYTKPYDQLLQADGQTLYIYDKDLNQVTERKLDGALGSSPAAILFGSNDLEKNFVVKNGPTRDGVEWLELTPKAKDTQFERIGIGFKAGNLEAMELRDAFGNTTLLTFTGMQKNPPLAADAFRFTVPKGADVMKQ</sequence>
<reference key="1">
    <citation type="journal article" date="2006" name="Nat. Biotechnol.">
        <title>Genome sequence of the bioplastic-producing 'Knallgas' bacterium Ralstonia eutropha H16.</title>
        <authorList>
            <person name="Pohlmann A."/>
            <person name="Fricke W.F."/>
            <person name="Reinecke F."/>
            <person name="Kusian B."/>
            <person name="Liesegang H."/>
            <person name="Cramm R."/>
            <person name="Eitinger T."/>
            <person name="Ewering C."/>
            <person name="Poetter M."/>
            <person name="Schwartz E."/>
            <person name="Strittmatter A."/>
            <person name="Voss I."/>
            <person name="Gottschalk G."/>
            <person name="Steinbuechel A."/>
            <person name="Friedrich B."/>
            <person name="Bowien B."/>
        </authorList>
    </citation>
    <scope>NUCLEOTIDE SEQUENCE [LARGE SCALE GENOMIC DNA]</scope>
    <source>
        <strain>ATCC 17699 / DSM 428 / KCTC 22496 / NCIMB 10442 / H16 / Stanier 337</strain>
    </source>
</reference>
<organism>
    <name type="scientific">Cupriavidus necator (strain ATCC 17699 / DSM 428 / KCTC 22496 / NCIMB 10442 / H16 / Stanier 337)</name>
    <name type="common">Ralstonia eutropha</name>
    <dbReference type="NCBI Taxonomy" id="381666"/>
    <lineage>
        <taxon>Bacteria</taxon>
        <taxon>Pseudomonadati</taxon>
        <taxon>Pseudomonadota</taxon>
        <taxon>Betaproteobacteria</taxon>
        <taxon>Burkholderiales</taxon>
        <taxon>Burkholderiaceae</taxon>
        <taxon>Cupriavidus</taxon>
    </lineage>
</organism>
<accession>Q0KDL8</accession>
<evidence type="ECO:0000255" key="1">
    <source>
        <dbReference type="HAMAP-Rule" id="MF_00240"/>
    </source>
</evidence>
<name>LOLA_CUPNH</name>
<proteinExistence type="inferred from homology"/>
<protein>
    <recommendedName>
        <fullName evidence="1">Outer-membrane lipoprotein carrier protein</fullName>
    </recommendedName>
</protein>
<dbReference type="EMBL" id="AM260479">
    <property type="protein sequence ID" value="CAJ91903.1"/>
    <property type="molecule type" value="Genomic_DNA"/>
</dbReference>
<dbReference type="RefSeq" id="WP_010812997.1">
    <property type="nucleotide sequence ID" value="NZ_CP039287.1"/>
</dbReference>
<dbReference type="SMR" id="Q0KDL8"/>
<dbReference type="STRING" id="381666.H16_A0755"/>
<dbReference type="KEGG" id="reh:H16_A0755"/>
<dbReference type="eggNOG" id="COG2834">
    <property type="taxonomic scope" value="Bacteria"/>
</dbReference>
<dbReference type="HOGENOM" id="CLU_087560_0_1_4"/>
<dbReference type="OrthoDB" id="9787361at2"/>
<dbReference type="Proteomes" id="UP000008210">
    <property type="component" value="Chromosome 1"/>
</dbReference>
<dbReference type="GO" id="GO:0030288">
    <property type="term" value="C:outer membrane-bounded periplasmic space"/>
    <property type="evidence" value="ECO:0007669"/>
    <property type="project" value="TreeGrafter"/>
</dbReference>
<dbReference type="GO" id="GO:0044874">
    <property type="term" value="P:lipoprotein localization to outer membrane"/>
    <property type="evidence" value="ECO:0007669"/>
    <property type="project" value="UniProtKB-UniRule"/>
</dbReference>
<dbReference type="GO" id="GO:0042953">
    <property type="term" value="P:lipoprotein transport"/>
    <property type="evidence" value="ECO:0007669"/>
    <property type="project" value="InterPro"/>
</dbReference>
<dbReference type="CDD" id="cd16325">
    <property type="entry name" value="LolA"/>
    <property type="match status" value="1"/>
</dbReference>
<dbReference type="Gene3D" id="2.50.20.10">
    <property type="entry name" value="Lipoprotein localisation LolA/LolB/LppX"/>
    <property type="match status" value="1"/>
</dbReference>
<dbReference type="HAMAP" id="MF_00240">
    <property type="entry name" value="LolA"/>
    <property type="match status" value="1"/>
</dbReference>
<dbReference type="InterPro" id="IPR029046">
    <property type="entry name" value="LolA/LolB/LppX"/>
</dbReference>
<dbReference type="InterPro" id="IPR004564">
    <property type="entry name" value="OM_lipoprot_carrier_LolA-like"/>
</dbReference>
<dbReference type="InterPro" id="IPR018323">
    <property type="entry name" value="OM_lipoprot_carrier_LolA_Pbac"/>
</dbReference>
<dbReference type="NCBIfam" id="TIGR00547">
    <property type="entry name" value="lolA"/>
    <property type="match status" value="1"/>
</dbReference>
<dbReference type="NCBIfam" id="NF000661">
    <property type="entry name" value="PRK00031.1-3"/>
    <property type="match status" value="1"/>
</dbReference>
<dbReference type="PANTHER" id="PTHR35869">
    <property type="entry name" value="OUTER-MEMBRANE LIPOPROTEIN CARRIER PROTEIN"/>
    <property type="match status" value="1"/>
</dbReference>
<dbReference type="PANTHER" id="PTHR35869:SF1">
    <property type="entry name" value="OUTER-MEMBRANE LIPOPROTEIN CARRIER PROTEIN"/>
    <property type="match status" value="1"/>
</dbReference>
<dbReference type="Pfam" id="PF03548">
    <property type="entry name" value="LolA"/>
    <property type="match status" value="1"/>
</dbReference>
<dbReference type="SUPFAM" id="SSF89392">
    <property type="entry name" value="Prokaryotic lipoproteins and lipoprotein localization factors"/>
    <property type="match status" value="1"/>
</dbReference>
<gene>
    <name evidence="1" type="primary">lolA</name>
    <name type="ordered locus">H16_A0755</name>
</gene>
<feature type="signal peptide" evidence="1">
    <location>
        <begin position="1"/>
        <end position="24"/>
    </location>
</feature>
<feature type="chain" id="PRO_0000336658" description="Outer-membrane lipoprotein carrier protein">
    <location>
        <begin position="25"/>
        <end position="211"/>
    </location>
</feature>
<keyword id="KW-0143">Chaperone</keyword>
<keyword id="KW-0574">Periplasm</keyword>
<keyword id="KW-0653">Protein transport</keyword>
<keyword id="KW-1185">Reference proteome</keyword>
<keyword id="KW-0732">Signal</keyword>
<keyword id="KW-0813">Transport</keyword>
<comment type="function">
    <text evidence="1">Participates in the translocation of lipoproteins from the inner membrane to the outer membrane. Only forms a complex with a lipoprotein if the residue after the N-terminal Cys is not an aspartate (The Asp acts as a targeting signal to indicate that the lipoprotein should stay in the inner membrane).</text>
</comment>
<comment type="subunit">
    <text evidence="1">Monomer.</text>
</comment>
<comment type="subcellular location">
    <subcellularLocation>
        <location evidence="1">Periplasm</location>
    </subcellularLocation>
</comment>
<comment type="similarity">
    <text evidence="1">Belongs to the LolA family.</text>
</comment>